<gene>
    <name evidence="1" type="primary">queF</name>
    <name type="ordered locus">Teth39_1438</name>
</gene>
<organism>
    <name type="scientific">Thermoanaerobacter pseudethanolicus (strain ATCC 33223 / 39E)</name>
    <name type="common">Clostridium thermohydrosulfuricum</name>
    <dbReference type="NCBI Taxonomy" id="340099"/>
    <lineage>
        <taxon>Bacteria</taxon>
        <taxon>Bacillati</taxon>
        <taxon>Bacillota</taxon>
        <taxon>Clostridia</taxon>
        <taxon>Thermoanaerobacterales</taxon>
        <taxon>Thermoanaerobacteraceae</taxon>
        <taxon>Thermoanaerobacter</taxon>
    </lineage>
</organism>
<evidence type="ECO:0000255" key="1">
    <source>
        <dbReference type="HAMAP-Rule" id="MF_00818"/>
    </source>
</evidence>
<name>QUEF_THEP3</name>
<keyword id="KW-0963">Cytoplasm</keyword>
<keyword id="KW-0521">NADP</keyword>
<keyword id="KW-0560">Oxidoreductase</keyword>
<keyword id="KW-0671">Queuosine biosynthesis</keyword>
<keyword id="KW-1185">Reference proteome</keyword>
<feature type="chain" id="PRO_1000134313" description="NADPH-dependent 7-cyano-7-deazaguanine reductase">
    <location>
        <begin position="1"/>
        <end position="133"/>
    </location>
</feature>
<feature type="active site" description="Thioimide intermediate" evidence="1">
    <location>
        <position position="48"/>
    </location>
</feature>
<feature type="active site" description="Proton donor" evidence="1">
    <location>
        <position position="55"/>
    </location>
</feature>
<feature type="binding site" evidence="1">
    <location>
        <begin position="70"/>
        <end position="72"/>
    </location>
    <ligand>
        <name>substrate</name>
    </ligand>
</feature>
<feature type="binding site" evidence="1">
    <location>
        <begin position="89"/>
        <end position="90"/>
    </location>
    <ligand>
        <name>substrate</name>
    </ligand>
</feature>
<accession>B0KAC5</accession>
<sequence>MTDKYKERRFDTYGYEKIDKEVLESIEYEYPEKNTIVEYITNEFSSVCPWTGLPDNAKLTIRYIPSKKLVELKSLKYYLTSYRNVGILQEHAINRILDDLVELLQPKFMEIIGEFQERGGIATRIVAKYEKEK</sequence>
<comment type="function">
    <text evidence="1">Catalyzes the NADPH-dependent reduction of 7-cyano-7-deazaguanine (preQ0) to 7-aminomethyl-7-deazaguanine (preQ1).</text>
</comment>
<comment type="catalytic activity">
    <reaction evidence="1">
        <text>7-aminomethyl-7-carbaguanine + 2 NADP(+) = 7-cyano-7-deazaguanine + 2 NADPH + 3 H(+)</text>
        <dbReference type="Rhea" id="RHEA:13409"/>
        <dbReference type="ChEBI" id="CHEBI:15378"/>
        <dbReference type="ChEBI" id="CHEBI:45075"/>
        <dbReference type="ChEBI" id="CHEBI:57783"/>
        <dbReference type="ChEBI" id="CHEBI:58349"/>
        <dbReference type="ChEBI" id="CHEBI:58703"/>
        <dbReference type="EC" id="1.7.1.13"/>
    </reaction>
</comment>
<comment type="pathway">
    <text evidence="1">tRNA modification; tRNA-queuosine biosynthesis.</text>
</comment>
<comment type="subcellular location">
    <subcellularLocation>
        <location evidence="1">Cytoplasm</location>
    </subcellularLocation>
</comment>
<comment type="similarity">
    <text evidence="1">Belongs to the GTP cyclohydrolase I family. QueF type 1 subfamily.</text>
</comment>
<proteinExistence type="inferred from homology"/>
<reference key="1">
    <citation type="submission" date="2008-01" db="EMBL/GenBank/DDBJ databases">
        <title>Complete sequence of Thermoanaerobacter pseudethanolicus 39E.</title>
        <authorList>
            <person name="Copeland A."/>
            <person name="Lucas S."/>
            <person name="Lapidus A."/>
            <person name="Barry K."/>
            <person name="Glavina del Rio T."/>
            <person name="Dalin E."/>
            <person name="Tice H."/>
            <person name="Pitluck S."/>
            <person name="Bruce D."/>
            <person name="Goodwin L."/>
            <person name="Saunders E."/>
            <person name="Brettin T."/>
            <person name="Detter J.C."/>
            <person name="Han C."/>
            <person name="Schmutz J."/>
            <person name="Larimer F."/>
            <person name="Land M."/>
            <person name="Hauser L."/>
            <person name="Kyrpides N."/>
            <person name="Lykidis A."/>
            <person name="Hemme C."/>
            <person name="Fields M.W."/>
            <person name="He Z."/>
            <person name="Zhou J."/>
            <person name="Richardson P."/>
        </authorList>
    </citation>
    <scope>NUCLEOTIDE SEQUENCE [LARGE SCALE GENOMIC DNA]</scope>
    <source>
        <strain>ATCC 33223 / DSM 2355 / 39E</strain>
    </source>
</reference>
<protein>
    <recommendedName>
        <fullName evidence="1">NADPH-dependent 7-cyano-7-deazaguanine reductase</fullName>
        <ecNumber evidence="1">1.7.1.13</ecNumber>
    </recommendedName>
    <alternativeName>
        <fullName evidence="1">7-cyano-7-carbaguanine reductase</fullName>
    </alternativeName>
    <alternativeName>
        <fullName evidence="1">NADPH-dependent nitrile oxidoreductase</fullName>
    </alternativeName>
    <alternativeName>
        <fullName evidence="1">PreQ(0) reductase</fullName>
    </alternativeName>
</protein>
<dbReference type="EC" id="1.7.1.13" evidence="1"/>
<dbReference type="EMBL" id="CP000924">
    <property type="protein sequence ID" value="ABY95088.1"/>
    <property type="molecule type" value="Genomic_DNA"/>
</dbReference>
<dbReference type="RefSeq" id="WP_003866912.1">
    <property type="nucleotide sequence ID" value="NC_010321.1"/>
</dbReference>
<dbReference type="SMR" id="B0KAC5"/>
<dbReference type="STRING" id="340099.Teth39_1438"/>
<dbReference type="KEGG" id="tpd:Teth39_1438"/>
<dbReference type="eggNOG" id="COG0780">
    <property type="taxonomic scope" value="Bacteria"/>
</dbReference>
<dbReference type="HOGENOM" id="CLU_102489_1_2_9"/>
<dbReference type="UniPathway" id="UPA00392"/>
<dbReference type="Proteomes" id="UP000002156">
    <property type="component" value="Chromosome"/>
</dbReference>
<dbReference type="GO" id="GO:0005737">
    <property type="term" value="C:cytoplasm"/>
    <property type="evidence" value="ECO:0007669"/>
    <property type="project" value="UniProtKB-SubCell"/>
</dbReference>
<dbReference type="GO" id="GO:0033739">
    <property type="term" value="F:preQ1 synthase activity"/>
    <property type="evidence" value="ECO:0007669"/>
    <property type="project" value="UniProtKB-UniRule"/>
</dbReference>
<dbReference type="GO" id="GO:0008616">
    <property type="term" value="P:queuosine biosynthetic process"/>
    <property type="evidence" value="ECO:0007669"/>
    <property type="project" value="UniProtKB-UniRule"/>
</dbReference>
<dbReference type="GO" id="GO:0006400">
    <property type="term" value="P:tRNA modification"/>
    <property type="evidence" value="ECO:0007669"/>
    <property type="project" value="UniProtKB-UniRule"/>
</dbReference>
<dbReference type="Gene3D" id="3.30.1130.10">
    <property type="match status" value="1"/>
</dbReference>
<dbReference type="HAMAP" id="MF_00818">
    <property type="entry name" value="QueF_type1"/>
    <property type="match status" value="1"/>
</dbReference>
<dbReference type="InterPro" id="IPR043133">
    <property type="entry name" value="GTP-CH-I_C/QueF"/>
</dbReference>
<dbReference type="InterPro" id="IPR050084">
    <property type="entry name" value="NADPH_dep_7-cyano-7-deazaG_red"/>
</dbReference>
<dbReference type="InterPro" id="IPR029500">
    <property type="entry name" value="QueF"/>
</dbReference>
<dbReference type="InterPro" id="IPR016856">
    <property type="entry name" value="QueF_type1"/>
</dbReference>
<dbReference type="NCBIfam" id="TIGR03139">
    <property type="entry name" value="QueF-II"/>
    <property type="match status" value="1"/>
</dbReference>
<dbReference type="PANTHER" id="PTHR34354">
    <property type="entry name" value="NADPH-DEPENDENT 7-CYANO-7-DEAZAGUANINE REDUCTASE"/>
    <property type="match status" value="1"/>
</dbReference>
<dbReference type="PANTHER" id="PTHR34354:SF1">
    <property type="entry name" value="NADPH-DEPENDENT 7-CYANO-7-DEAZAGUANINE REDUCTASE"/>
    <property type="match status" value="1"/>
</dbReference>
<dbReference type="Pfam" id="PF14489">
    <property type="entry name" value="QueF"/>
    <property type="match status" value="1"/>
</dbReference>
<dbReference type="PIRSF" id="PIRSF027377">
    <property type="entry name" value="Nitrile_oxidored_QueF"/>
    <property type="match status" value="1"/>
</dbReference>
<dbReference type="SUPFAM" id="SSF55620">
    <property type="entry name" value="Tetrahydrobiopterin biosynthesis enzymes-like"/>
    <property type="match status" value="1"/>
</dbReference>